<dbReference type="EC" id="2.3.1.47"/>
<dbReference type="EMBL" id="CP000854">
    <property type="protein sequence ID" value="ACC40833.1"/>
    <property type="molecule type" value="Genomic_DNA"/>
</dbReference>
<dbReference type="RefSeq" id="WP_012394132.1">
    <property type="nucleotide sequence ID" value="NC_010612.1"/>
</dbReference>
<dbReference type="SMR" id="B2HQ90"/>
<dbReference type="STRING" id="216594.MMAR_2384"/>
<dbReference type="KEGG" id="mmi:MMAR_2384"/>
<dbReference type="eggNOG" id="COG0156">
    <property type="taxonomic scope" value="Bacteria"/>
</dbReference>
<dbReference type="HOGENOM" id="CLU_015846_11_2_11"/>
<dbReference type="OrthoDB" id="9807157at2"/>
<dbReference type="UniPathway" id="UPA00078"/>
<dbReference type="Proteomes" id="UP000001190">
    <property type="component" value="Chromosome"/>
</dbReference>
<dbReference type="GO" id="GO:0008710">
    <property type="term" value="F:8-amino-7-oxononanoate synthase activity"/>
    <property type="evidence" value="ECO:0007669"/>
    <property type="project" value="UniProtKB-EC"/>
</dbReference>
<dbReference type="GO" id="GO:0030170">
    <property type="term" value="F:pyridoxal phosphate binding"/>
    <property type="evidence" value="ECO:0007669"/>
    <property type="project" value="InterPro"/>
</dbReference>
<dbReference type="GO" id="GO:0009102">
    <property type="term" value="P:biotin biosynthetic process"/>
    <property type="evidence" value="ECO:0007669"/>
    <property type="project" value="UniProtKB-UniPathway"/>
</dbReference>
<dbReference type="Gene3D" id="3.90.1150.10">
    <property type="entry name" value="Aspartate Aminotransferase, domain 1"/>
    <property type="match status" value="1"/>
</dbReference>
<dbReference type="Gene3D" id="3.40.640.10">
    <property type="entry name" value="Type I PLP-dependent aspartate aminotransferase-like (Major domain)"/>
    <property type="match status" value="1"/>
</dbReference>
<dbReference type="InterPro" id="IPR001917">
    <property type="entry name" value="Aminotrans_II_pyridoxalP_BS"/>
</dbReference>
<dbReference type="InterPro" id="IPR004839">
    <property type="entry name" value="Aminotransferase_I/II_large"/>
</dbReference>
<dbReference type="InterPro" id="IPR050087">
    <property type="entry name" value="AON_synthase_class-II"/>
</dbReference>
<dbReference type="InterPro" id="IPR015424">
    <property type="entry name" value="PyrdxlP-dep_Trfase"/>
</dbReference>
<dbReference type="InterPro" id="IPR015421">
    <property type="entry name" value="PyrdxlP-dep_Trfase_major"/>
</dbReference>
<dbReference type="InterPro" id="IPR015422">
    <property type="entry name" value="PyrdxlP-dep_Trfase_small"/>
</dbReference>
<dbReference type="PANTHER" id="PTHR13693:SF100">
    <property type="entry name" value="8-AMINO-7-OXONONANOATE SYNTHASE"/>
    <property type="match status" value="1"/>
</dbReference>
<dbReference type="PANTHER" id="PTHR13693">
    <property type="entry name" value="CLASS II AMINOTRANSFERASE/8-AMINO-7-OXONONANOATE SYNTHASE"/>
    <property type="match status" value="1"/>
</dbReference>
<dbReference type="Pfam" id="PF00155">
    <property type="entry name" value="Aminotran_1_2"/>
    <property type="match status" value="1"/>
</dbReference>
<dbReference type="SUPFAM" id="SSF53383">
    <property type="entry name" value="PLP-dependent transferases"/>
    <property type="match status" value="1"/>
</dbReference>
<dbReference type="PROSITE" id="PS00599">
    <property type="entry name" value="AA_TRANSFER_CLASS_2"/>
    <property type="match status" value="1"/>
</dbReference>
<protein>
    <recommendedName>
        <fullName>8-amino-7-oxononanoate synthase</fullName>
        <shortName>AONS</shortName>
        <ecNumber>2.3.1.47</ecNumber>
    </recommendedName>
    <alternativeName>
        <fullName>7-keto-8-amino-pelargonic acid synthase</fullName>
        <shortName>7-KAP synthase</shortName>
        <shortName>KAPA synthase</shortName>
    </alternativeName>
    <alternativeName>
        <fullName>8-amino-7-ketopelargonate synthase</fullName>
    </alternativeName>
    <alternativeName>
        <fullName>Alpha-oxoamine synthase</fullName>
    </alternativeName>
</protein>
<keyword id="KW-0012">Acyltransferase</keyword>
<keyword id="KW-0093">Biotin biosynthesis</keyword>
<keyword id="KW-0663">Pyridoxal phosphate</keyword>
<keyword id="KW-1185">Reference proteome</keyword>
<keyword id="KW-0808">Transferase</keyword>
<organism>
    <name type="scientific">Mycobacterium marinum (strain ATCC BAA-535 / M)</name>
    <dbReference type="NCBI Taxonomy" id="216594"/>
    <lineage>
        <taxon>Bacteria</taxon>
        <taxon>Bacillati</taxon>
        <taxon>Actinomycetota</taxon>
        <taxon>Actinomycetes</taxon>
        <taxon>Mycobacteriales</taxon>
        <taxon>Mycobacteriaceae</taxon>
        <taxon>Mycobacterium</taxon>
        <taxon>Mycobacterium ulcerans group</taxon>
    </lineage>
</organism>
<evidence type="ECO:0000250" key="1"/>
<evidence type="ECO:0000305" key="2"/>
<comment type="function">
    <text evidence="1">Catalyzes the decarboxylative condensation of pimeloyl-[acyl-carrier protein] and L-alanine to produce 8-amino-7-oxononanoate (AON), [acyl-carrier protein], and carbon dioxide.</text>
</comment>
<comment type="catalytic activity">
    <reaction>
        <text>6-carboxyhexanoyl-[ACP] + L-alanine + H(+) = (8S)-8-amino-7-oxononanoate + holo-[ACP] + CO2</text>
        <dbReference type="Rhea" id="RHEA:42288"/>
        <dbReference type="Rhea" id="RHEA-COMP:9685"/>
        <dbReference type="Rhea" id="RHEA-COMP:9955"/>
        <dbReference type="ChEBI" id="CHEBI:15378"/>
        <dbReference type="ChEBI" id="CHEBI:16526"/>
        <dbReference type="ChEBI" id="CHEBI:57972"/>
        <dbReference type="ChEBI" id="CHEBI:64479"/>
        <dbReference type="ChEBI" id="CHEBI:78846"/>
        <dbReference type="ChEBI" id="CHEBI:149468"/>
        <dbReference type="EC" id="2.3.1.47"/>
    </reaction>
</comment>
<comment type="cofactor">
    <cofactor evidence="1">
        <name>pyridoxal 5'-phosphate</name>
        <dbReference type="ChEBI" id="CHEBI:597326"/>
    </cofactor>
</comment>
<comment type="pathway">
    <text>Cofactor biosynthesis; biotin biosynthesis.</text>
</comment>
<comment type="subunit">
    <text evidence="1">Homodimer.</text>
</comment>
<comment type="similarity">
    <text evidence="2">Belongs to the class-II pyridoxal-phosphate-dependent aminotransferase family. BioF subfamily.</text>
</comment>
<proteinExistence type="inferred from homology"/>
<reference key="1">
    <citation type="journal article" date="2008" name="Genome Res.">
        <title>Insights from the complete genome sequence of Mycobacterium marinum on the evolution of Mycobacterium tuberculosis.</title>
        <authorList>
            <person name="Stinear T.P."/>
            <person name="Seemann T."/>
            <person name="Harrison P.F."/>
            <person name="Jenkin G.A."/>
            <person name="Davies J.K."/>
            <person name="Johnson P.D."/>
            <person name="Abdellah Z."/>
            <person name="Arrowsmith C."/>
            <person name="Chillingworth T."/>
            <person name="Churcher C."/>
            <person name="Clarke K."/>
            <person name="Cronin A."/>
            <person name="Davis P."/>
            <person name="Goodhead I."/>
            <person name="Holroyd N."/>
            <person name="Jagels K."/>
            <person name="Lord A."/>
            <person name="Moule S."/>
            <person name="Mungall K."/>
            <person name="Norbertczak H."/>
            <person name="Quail M.A."/>
            <person name="Rabbinowitsch E."/>
            <person name="Walker D."/>
            <person name="White B."/>
            <person name="Whitehead S."/>
            <person name="Small P.L."/>
            <person name="Brosch R."/>
            <person name="Ramakrishnan L."/>
            <person name="Fischbach M.A."/>
            <person name="Parkhill J."/>
            <person name="Cole S.T."/>
        </authorList>
    </citation>
    <scope>NUCLEOTIDE SEQUENCE [LARGE SCALE GENOMIC DNA]</scope>
    <source>
        <strain>ATCC BAA-535 / M</strain>
    </source>
</reference>
<name>BIOF_MYCMM</name>
<feature type="chain" id="PRO_0000381037" description="8-amino-7-oxononanoate synthase">
    <location>
        <begin position="1"/>
        <end position="389"/>
    </location>
</feature>
<feature type="binding site" evidence="1">
    <location>
        <position position="31"/>
    </location>
    <ligand>
        <name>substrate</name>
    </ligand>
</feature>
<feature type="binding site" evidence="1">
    <location>
        <begin position="109"/>
        <end position="110"/>
    </location>
    <ligand>
        <name>pyridoxal 5'-phosphate</name>
        <dbReference type="ChEBI" id="CHEBI:597326"/>
    </ligand>
</feature>
<feature type="binding site" evidence="1">
    <location>
        <position position="134"/>
    </location>
    <ligand>
        <name>substrate</name>
    </ligand>
</feature>
<feature type="binding site" evidence="1">
    <location>
        <position position="180"/>
    </location>
    <ligand>
        <name>pyridoxal 5'-phosphate</name>
        <dbReference type="ChEBI" id="CHEBI:597326"/>
    </ligand>
</feature>
<feature type="binding site" evidence="1">
    <location>
        <begin position="205"/>
        <end position="208"/>
    </location>
    <ligand>
        <name>pyridoxal 5'-phosphate</name>
        <dbReference type="ChEBI" id="CHEBI:597326"/>
    </ligand>
</feature>
<feature type="binding site" evidence="1">
    <location>
        <begin position="236"/>
        <end position="239"/>
    </location>
    <ligand>
        <name>pyridoxal 5'-phosphate</name>
        <dbReference type="ChEBI" id="CHEBI:597326"/>
    </ligand>
</feature>
<feature type="binding site" evidence="1">
    <location>
        <position position="349"/>
    </location>
    <ligand>
        <name>substrate</name>
    </ligand>
</feature>
<feature type="modified residue" description="N6-(pyridoxal phosphate)lysine" evidence="1">
    <location>
        <position position="239"/>
    </location>
</feature>
<gene>
    <name type="ordered locus">MMAR_2384</name>
</gene>
<sequence>MGAPTQIPIETSPLAWLDAVERQRRDAGLRRSLRPRPPVGTELDLASNDYLGLSQHPDVIEGGVQALRIWGAGATGSRLVTGDTELHQQLEAELAEYVGAAAGLLFSSGYTANLGAVVGLSGPGSLLVSDAYSHASLVDACRLSRARVVVTPHRDVAAVDAALASRDEQRAMVITDSVFSADGTLAPLRELLAACRRHRALLVIDEAHGLGVRGGGRGLLHELGLAGAPDVVLTTTLSKALGSQGGAVLGPAAVRAHLIDAARPFIFDTGLAPAAVGAARAALGVLKAEQWRPDAVLQNARELADICDVPETPQSAVVSVLLGDPEVALAAAAACLDAGVKVGCFRPPTVPAGTSRLRLTARASLSPDEMELARRVLTDVLLGPAAARR</sequence>
<accession>B2HQ90</accession>